<accession>P56902</accession>
<protein>
    <recommendedName>
        <fullName>3-oxoacyl-[acyl-carrier-protein] synthase 2</fullName>
        <ecNumber evidence="1">2.3.1.179</ecNumber>
    </recommendedName>
    <alternativeName>
        <fullName>3-oxoacyl-[acyl-carrier-protein] synthase II</fullName>
    </alternativeName>
    <alternativeName>
        <fullName>Beta-ketoacyl-ACP synthase II</fullName>
        <shortName>KAS II</shortName>
    </alternativeName>
</protein>
<sequence>MRRVVITGTGMVSPLGCGTEVSWARLLTGDNAARKVTEFEVEDLPAKIACRIPFGDGSDGTFNADDWMEPKEQRKVDPFIVYAMAAADMALADAGWKPESDEDQISTGVLIGSGIGGLEGIVDAGYTLRDKGPRRISPFFIPGRLINLAAGQVSIRHKLRGPNHSVVTACSTGAHAIGDASRLIALGDADVMVAGGTESPICRISLAGFAACKALSTQHNDNPEKASRPYDADRDGFVMGEGAGIVVLEELEHARARGAKIYAEVIGYGLSGDAFHITAPSEDGEGAYRCMQMALKRAGVTAADIDYINAHGTSTMADTIELGAVERLVGDSASRISMSSTKSAIGHLLGAAGAVEAIFSALAIRDNIAPPTLNLDNPSVETKIDLVPHVARKREINVALSNSFGFGGTNASLILRRYTGH</sequence>
<keyword id="KW-0012">Acyltransferase</keyword>
<keyword id="KW-0275">Fatty acid biosynthesis</keyword>
<keyword id="KW-0276">Fatty acid metabolism</keyword>
<keyword id="KW-0444">Lipid biosynthesis</keyword>
<keyword id="KW-0443">Lipid metabolism</keyword>
<keyword id="KW-1185">Reference proteome</keyword>
<keyword id="KW-0808">Transferase</keyword>
<feature type="chain" id="PRO_0000180317" description="3-oxoacyl-[acyl-carrier-protein] synthase 2">
    <location>
        <begin position="1"/>
        <end position="421"/>
    </location>
</feature>
<feature type="domain" description="Ketosynthase family 3 (KS3)" evidence="2">
    <location>
        <begin position="1"/>
        <end position="417"/>
    </location>
</feature>
<feature type="active site" description="For beta-ketoacyl synthase activity" evidence="2">
    <location>
        <position position="170"/>
    </location>
</feature>
<feature type="active site" description="For beta-ketoacyl synthase activity" evidence="2">
    <location>
        <position position="311"/>
    </location>
</feature>
<feature type="active site" description="For beta-ketoacyl synthase activity" evidence="2">
    <location>
        <position position="347"/>
    </location>
</feature>
<organism>
    <name type="scientific">Rhizobium meliloti (strain 1021)</name>
    <name type="common">Ensifer meliloti</name>
    <name type="synonym">Sinorhizobium meliloti</name>
    <dbReference type="NCBI Taxonomy" id="266834"/>
    <lineage>
        <taxon>Bacteria</taxon>
        <taxon>Pseudomonadati</taxon>
        <taxon>Pseudomonadota</taxon>
        <taxon>Alphaproteobacteria</taxon>
        <taxon>Hyphomicrobiales</taxon>
        <taxon>Rhizobiaceae</taxon>
        <taxon>Sinorhizobium/Ensifer group</taxon>
        <taxon>Sinorhizobium</taxon>
    </lineage>
</organism>
<evidence type="ECO:0000250" key="1">
    <source>
        <dbReference type="UniProtKB" id="P0AAI5"/>
    </source>
</evidence>
<evidence type="ECO:0000255" key="2">
    <source>
        <dbReference type="PROSITE-ProRule" id="PRU01348"/>
    </source>
</evidence>
<evidence type="ECO:0000305" key="3"/>
<proteinExistence type="inferred from homology"/>
<dbReference type="EC" id="2.3.1.179" evidence="1"/>
<dbReference type="EMBL" id="AF159244">
    <property type="protein sequence ID" value="AAF24182.2"/>
    <property type="molecule type" value="Genomic_DNA"/>
</dbReference>
<dbReference type="EMBL" id="AL591688">
    <property type="protein sequence ID" value="CAC45723.1"/>
    <property type="molecule type" value="Genomic_DNA"/>
</dbReference>
<dbReference type="RefSeq" id="NP_385250.1">
    <property type="nucleotide sequence ID" value="NC_003047.1"/>
</dbReference>
<dbReference type="RefSeq" id="WP_010969069.1">
    <property type="nucleotide sequence ID" value="NC_003047.1"/>
</dbReference>
<dbReference type="SMR" id="P56902"/>
<dbReference type="EnsemblBacteria" id="CAC45723">
    <property type="protein sequence ID" value="CAC45723"/>
    <property type="gene ID" value="SMc00574"/>
</dbReference>
<dbReference type="KEGG" id="sme:SMc00574"/>
<dbReference type="PATRIC" id="fig|266834.11.peg.2553"/>
<dbReference type="eggNOG" id="COG0304">
    <property type="taxonomic scope" value="Bacteria"/>
</dbReference>
<dbReference type="HOGENOM" id="CLU_000022_69_2_5"/>
<dbReference type="OrthoDB" id="9808669at2"/>
<dbReference type="UniPathway" id="UPA00094"/>
<dbReference type="Proteomes" id="UP000001976">
    <property type="component" value="Chromosome"/>
</dbReference>
<dbReference type="GO" id="GO:0004315">
    <property type="term" value="F:3-oxoacyl-[acyl-carrier-protein] synthase activity"/>
    <property type="evidence" value="ECO:0007669"/>
    <property type="project" value="UniProtKB-EC"/>
</dbReference>
<dbReference type="GO" id="GO:0006633">
    <property type="term" value="P:fatty acid biosynthetic process"/>
    <property type="evidence" value="ECO:0007669"/>
    <property type="project" value="UniProtKB-UniPathway"/>
</dbReference>
<dbReference type="CDD" id="cd00834">
    <property type="entry name" value="KAS_I_II"/>
    <property type="match status" value="1"/>
</dbReference>
<dbReference type="FunFam" id="3.40.47.10:FF:000015">
    <property type="entry name" value="3-oxoacyl-[acyl-carrier-protein] synthase, mitochondrial"/>
    <property type="match status" value="1"/>
</dbReference>
<dbReference type="FunFam" id="3.40.47.10:FF:000024">
    <property type="entry name" value="3-oxoacyl-[acyl-carrier-protein] synthase, mitochondrial"/>
    <property type="match status" value="1"/>
</dbReference>
<dbReference type="Gene3D" id="3.40.47.10">
    <property type="match status" value="2"/>
</dbReference>
<dbReference type="InterPro" id="IPR017568">
    <property type="entry name" value="3-oxoacyl-ACP_synth-2"/>
</dbReference>
<dbReference type="InterPro" id="IPR000794">
    <property type="entry name" value="Beta-ketoacyl_synthase"/>
</dbReference>
<dbReference type="InterPro" id="IPR018201">
    <property type="entry name" value="Ketoacyl_synth_AS"/>
</dbReference>
<dbReference type="InterPro" id="IPR014031">
    <property type="entry name" value="Ketoacyl_synth_C"/>
</dbReference>
<dbReference type="InterPro" id="IPR014030">
    <property type="entry name" value="Ketoacyl_synth_N"/>
</dbReference>
<dbReference type="InterPro" id="IPR020841">
    <property type="entry name" value="PKS_Beta-ketoAc_synthase_dom"/>
</dbReference>
<dbReference type="InterPro" id="IPR016039">
    <property type="entry name" value="Thiolase-like"/>
</dbReference>
<dbReference type="NCBIfam" id="TIGR03150">
    <property type="entry name" value="fabF"/>
    <property type="match status" value="1"/>
</dbReference>
<dbReference type="NCBIfam" id="NF004970">
    <property type="entry name" value="PRK06333.1"/>
    <property type="match status" value="1"/>
</dbReference>
<dbReference type="NCBIfam" id="NF005589">
    <property type="entry name" value="PRK07314.1"/>
    <property type="match status" value="1"/>
</dbReference>
<dbReference type="PANTHER" id="PTHR11712:SF336">
    <property type="entry name" value="3-OXOACYL-[ACYL-CARRIER-PROTEIN] SYNTHASE, MITOCHONDRIAL"/>
    <property type="match status" value="1"/>
</dbReference>
<dbReference type="PANTHER" id="PTHR11712">
    <property type="entry name" value="POLYKETIDE SYNTHASE-RELATED"/>
    <property type="match status" value="1"/>
</dbReference>
<dbReference type="Pfam" id="PF00109">
    <property type="entry name" value="ketoacyl-synt"/>
    <property type="match status" value="1"/>
</dbReference>
<dbReference type="Pfam" id="PF02801">
    <property type="entry name" value="Ketoacyl-synt_C"/>
    <property type="match status" value="1"/>
</dbReference>
<dbReference type="PIRSF" id="PIRSF000447">
    <property type="entry name" value="KAS_II"/>
    <property type="match status" value="1"/>
</dbReference>
<dbReference type="SMART" id="SM00825">
    <property type="entry name" value="PKS_KS"/>
    <property type="match status" value="1"/>
</dbReference>
<dbReference type="SUPFAM" id="SSF53901">
    <property type="entry name" value="Thiolase-like"/>
    <property type="match status" value="2"/>
</dbReference>
<dbReference type="PROSITE" id="PS00606">
    <property type="entry name" value="KS3_1"/>
    <property type="match status" value="1"/>
</dbReference>
<dbReference type="PROSITE" id="PS52004">
    <property type="entry name" value="KS3_2"/>
    <property type="match status" value="1"/>
</dbReference>
<name>FABF_RHIME</name>
<reference key="1">
    <citation type="journal article" date="2000" name="Microbiology">
        <title>Expression and purification of four different rhizobial acyl carrier proteins.</title>
        <authorList>
            <person name="Lopez-Lara I.M."/>
            <person name="Geiger O."/>
        </authorList>
    </citation>
    <scope>NUCLEOTIDE SEQUENCE [GENOMIC DNA]</scope>
    <source>
        <strain>1021</strain>
    </source>
</reference>
<reference key="2">
    <citation type="journal article" date="2001" name="Proc. Natl. Acad. Sci. U.S.A.">
        <title>Analysis of the chromosome sequence of the legume symbiont Sinorhizobium meliloti strain 1021.</title>
        <authorList>
            <person name="Capela D."/>
            <person name="Barloy-Hubler F."/>
            <person name="Gouzy J."/>
            <person name="Bothe G."/>
            <person name="Ampe F."/>
            <person name="Batut J."/>
            <person name="Boistard P."/>
            <person name="Becker A."/>
            <person name="Boutry M."/>
            <person name="Cadieu E."/>
            <person name="Dreano S."/>
            <person name="Gloux S."/>
            <person name="Godrie T."/>
            <person name="Goffeau A."/>
            <person name="Kahn D."/>
            <person name="Kiss E."/>
            <person name="Lelaure V."/>
            <person name="Masuy D."/>
            <person name="Pohl T."/>
            <person name="Portetelle D."/>
            <person name="Puehler A."/>
            <person name="Purnelle B."/>
            <person name="Ramsperger U."/>
            <person name="Renard C."/>
            <person name="Thebault P."/>
            <person name="Vandenbol M."/>
            <person name="Weidner S."/>
            <person name="Galibert F."/>
        </authorList>
    </citation>
    <scope>NUCLEOTIDE SEQUENCE [LARGE SCALE GENOMIC DNA]</scope>
    <source>
        <strain>1021</strain>
    </source>
</reference>
<reference key="3">
    <citation type="journal article" date="2001" name="Science">
        <title>The composite genome of the legume symbiont Sinorhizobium meliloti.</title>
        <authorList>
            <person name="Galibert F."/>
            <person name="Finan T.M."/>
            <person name="Long S.R."/>
            <person name="Puehler A."/>
            <person name="Abola P."/>
            <person name="Ampe F."/>
            <person name="Barloy-Hubler F."/>
            <person name="Barnett M.J."/>
            <person name="Becker A."/>
            <person name="Boistard P."/>
            <person name="Bothe G."/>
            <person name="Boutry M."/>
            <person name="Bowser L."/>
            <person name="Buhrmester J."/>
            <person name="Cadieu E."/>
            <person name="Capela D."/>
            <person name="Chain P."/>
            <person name="Cowie A."/>
            <person name="Davis R.W."/>
            <person name="Dreano S."/>
            <person name="Federspiel N.A."/>
            <person name="Fisher R.F."/>
            <person name="Gloux S."/>
            <person name="Godrie T."/>
            <person name="Goffeau A."/>
            <person name="Golding B."/>
            <person name="Gouzy J."/>
            <person name="Gurjal M."/>
            <person name="Hernandez-Lucas I."/>
            <person name="Hong A."/>
            <person name="Huizar L."/>
            <person name="Hyman R.W."/>
            <person name="Jones T."/>
            <person name="Kahn D."/>
            <person name="Kahn M.L."/>
            <person name="Kalman S."/>
            <person name="Keating D.H."/>
            <person name="Kiss E."/>
            <person name="Komp C."/>
            <person name="Lelaure V."/>
            <person name="Masuy D."/>
            <person name="Palm C."/>
            <person name="Peck M.C."/>
            <person name="Pohl T.M."/>
            <person name="Portetelle D."/>
            <person name="Purnelle B."/>
            <person name="Ramsperger U."/>
            <person name="Surzycki R."/>
            <person name="Thebault P."/>
            <person name="Vandenbol M."/>
            <person name="Vorhoelter F.J."/>
            <person name="Weidner S."/>
            <person name="Wells D.H."/>
            <person name="Wong K."/>
            <person name="Yeh K.-C."/>
            <person name="Batut J."/>
        </authorList>
    </citation>
    <scope>NUCLEOTIDE SEQUENCE [LARGE SCALE GENOMIC DNA]</scope>
    <source>
        <strain>1021</strain>
    </source>
</reference>
<gene>
    <name type="primary">fabF</name>
    <name type="ordered locus">R01144</name>
    <name type="ORF">SMc00574</name>
</gene>
<comment type="function">
    <text evidence="1">Involved in the type II fatty acid elongation cycle. Catalyzes the elongation of a wide range of acyl-ACP by the addition of two carbons from malonyl-ACP to an acyl acceptor. Can efficiently catalyze the conversion of palmitoleoyl-ACP (cis-hexadec-9-enoyl-ACP) to cis-vaccenoyl-ACP (cis-octadec-11-enoyl-ACP), an essential step in the thermal regulation of fatty acid composition.</text>
</comment>
<comment type="catalytic activity">
    <reaction evidence="1">
        <text>a fatty acyl-[ACP] + malonyl-[ACP] + H(+) = a 3-oxoacyl-[ACP] + holo-[ACP] + CO2</text>
        <dbReference type="Rhea" id="RHEA:22836"/>
        <dbReference type="Rhea" id="RHEA-COMP:9623"/>
        <dbReference type="Rhea" id="RHEA-COMP:9685"/>
        <dbReference type="Rhea" id="RHEA-COMP:9916"/>
        <dbReference type="Rhea" id="RHEA-COMP:14125"/>
        <dbReference type="ChEBI" id="CHEBI:15378"/>
        <dbReference type="ChEBI" id="CHEBI:16526"/>
        <dbReference type="ChEBI" id="CHEBI:64479"/>
        <dbReference type="ChEBI" id="CHEBI:78449"/>
        <dbReference type="ChEBI" id="CHEBI:78776"/>
        <dbReference type="ChEBI" id="CHEBI:138651"/>
    </reaction>
</comment>
<comment type="catalytic activity">
    <reaction evidence="1">
        <text>(9Z)-hexadecenoyl-[ACP] + malonyl-[ACP] + H(+) = 3-oxo-(11Z)-octadecenoyl-[ACP] + holo-[ACP] + CO2</text>
        <dbReference type="Rhea" id="RHEA:55040"/>
        <dbReference type="Rhea" id="RHEA-COMP:9623"/>
        <dbReference type="Rhea" id="RHEA-COMP:9685"/>
        <dbReference type="Rhea" id="RHEA-COMP:10800"/>
        <dbReference type="Rhea" id="RHEA-COMP:14074"/>
        <dbReference type="ChEBI" id="CHEBI:15378"/>
        <dbReference type="ChEBI" id="CHEBI:16526"/>
        <dbReference type="ChEBI" id="CHEBI:64479"/>
        <dbReference type="ChEBI" id="CHEBI:78449"/>
        <dbReference type="ChEBI" id="CHEBI:83989"/>
        <dbReference type="ChEBI" id="CHEBI:138538"/>
        <dbReference type="EC" id="2.3.1.179"/>
    </reaction>
</comment>
<comment type="pathway">
    <text evidence="1">Lipid metabolism; fatty acid biosynthesis.</text>
</comment>
<comment type="subunit">
    <text evidence="1">Homodimer.</text>
</comment>
<comment type="similarity">
    <text evidence="3">Belongs to the thiolase-like superfamily. Beta-ketoacyl-ACP synthases family.</text>
</comment>